<keyword id="KW-1003">Cell membrane</keyword>
<keyword id="KW-1015">Disulfide bond</keyword>
<keyword id="KW-0297">G-protein coupled receptor</keyword>
<keyword id="KW-0325">Glycoprotein</keyword>
<keyword id="KW-0472">Membrane</keyword>
<keyword id="KW-0552">Olfaction</keyword>
<keyword id="KW-0675">Receptor</keyword>
<keyword id="KW-1185">Reference proteome</keyword>
<keyword id="KW-0716">Sensory transduction</keyword>
<keyword id="KW-0807">Transducer</keyword>
<keyword id="KW-0812">Transmembrane</keyword>
<keyword id="KW-1133">Transmembrane helix</keyword>
<proteinExistence type="inferred from homology"/>
<sequence length="317" mass="36239">MEKTNHSLTTQFILVGFSDHPDLKTPLFLLFSVIYLVTMVGNLGLVAVIYLEPRLHTPMYIFLGNLALMDSCCSCAITPKILENFFSVDRRISLYECMAQFYFLCLAETADCFLLAAMAYDRYVAICNPLQYHSMMSKKLSIQMSIGTFITSNLHSLIHVGCLLRLTFCKSNRIDHFFCDILPLYRLSCTDPFINELMIYIFSMPIQVFTITTVLVSYFCILLTIFKMKSKDGRGKAFSTCASHFFSVSIFYVCLLMYIRPFDEGNKDIPVAVFYTIIIPLLNPFIYSLRNKEVVNAVKKVMKTHSIFKNASASMAR</sequence>
<protein>
    <recommendedName>
        <fullName evidence="3">Olfactory receptor 5K16</fullName>
    </recommendedName>
    <alternativeName>
        <fullName>Olfactory receptor Olfr180</fullName>
    </alternativeName>
</protein>
<evidence type="ECO:0000255" key="1"/>
<evidence type="ECO:0000255" key="2">
    <source>
        <dbReference type="PROSITE-ProRule" id="PRU00521"/>
    </source>
</evidence>
<evidence type="ECO:0000305" key="3"/>
<evidence type="ECO:0000312" key="4">
    <source>
        <dbReference type="MGI" id="MGI:3030014"/>
    </source>
</evidence>
<accession>Q7TS48</accession>
<name>OL180_MOUSE</name>
<dbReference type="EMBL" id="AY317265">
    <property type="protein sequence ID" value="AAP70773.1"/>
    <property type="molecule type" value="Genomic_DNA"/>
</dbReference>
<dbReference type="CCDS" id="CCDS28239.1"/>
<dbReference type="SMR" id="Q7TS48"/>
<dbReference type="FunCoup" id="Q7TS48">
    <property type="interactions" value="759"/>
</dbReference>
<dbReference type="STRING" id="10090.ENSMUSP00000128358"/>
<dbReference type="GlyCosmos" id="Q7TS48">
    <property type="glycosylation" value="1 site, No reported glycans"/>
</dbReference>
<dbReference type="GlyGen" id="Q7TS48">
    <property type="glycosylation" value="1 site"/>
</dbReference>
<dbReference type="PaxDb" id="10090-ENSMUSP00000128358"/>
<dbReference type="AGR" id="MGI:3030014"/>
<dbReference type="MGI" id="MGI:3030014">
    <property type="gene designation" value="Or5k16"/>
</dbReference>
<dbReference type="eggNOG" id="KOG3656">
    <property type="taxonomic scope" value="Eukaryota"/>
</dbReference>
<dbReference type="InParanoid" id="Q7TS48"/>
<dbReference type="OrthoDB" id="9444602at2759"/>
<dbReference type="PRO" id="PR:Q7TS48"/>
<dbReference type="Proteomes" id="UP000000589">
    <property type="component" value="Unplaced"/>
</dbReference>
<dbReference type="RNAct" id="Q7TS48">
    <property type="molecule type" value="protein"/>
</dbReference>
<dbReference type="GO" id="GO:0016020">
    <property type="term" value="C:membrane"/>
    <property type="evidence" value="ECO:0000247"/>
    <property type="project" value="MGI"/>
</dbReference>
<dbReference type="GO" id="GO:0005886">
    <property type="term" value="C:plasma membrane"/>
    <property type="evidence" value="ECO:0007669"/>
    <property type="project" value="UniProtKB-SubCell"/>
</dbReference>
<dbReference type="GO" id="GO:0004930">
    <property type="term" value="F:G protein-coupled receptor activity"/>
    <property type="evidence" value="ECO:0007669"/>
    <property type="project" value="UniProtKB-KW"/>
</dbReference>
<dbReference type="GO" id="GO:0004984">
    <property type="term" value="F:olfactory receptor activity"/>
    <property type="evidence" value="ECO:0000247"/>
    <property type="project" value="MGI"/>
</dbReference>
<dbReference type="GO" id="GO:0007186">
    <property type="term" value="P:G protein-coupled receptor signaling pathway"/>
    <property type="evidence" value="ECO:0000247"/>
    <property type="project" value="MGI"/>
</dbReference>
<dbReference type="GO" id="GO:0007608">
    <property type="term" value="P:sensory perception of smell"/>
    <property type="evidence" value="ECO:0000247"/>
    <property type="project" value="MGI"/>
</dbReference>
<dbReference type="FunFam" id="1.20.1070.10:FF:000004">
    <property type="entry name" value="Olfactory receptor"/>
    <property type="match status" value="1"/>
</dbReference>
<dbReference type="Gene3D" id="1.20.1070.10">
    <property type="entry name" value="Rhodopsin 7-helix transmembrane proteins"/>
    <property type="match status" value="1"/>
</dbReference>
<dbReference type="InterPro" id="IPR000276">
    <property type="entry name" value="GPCR_Rhodpsn"/>
</dbReference>
<dbReference type="InterPro" id="IPR017452">
    <property type="entry name" value="GPCR_Rhodpsn_7TM"/>
</dbReference>
<dbReference type="InterPro" id="IPR000725">
    <property type="entry name" value="Olfact_rcpt"/>
</dbReference>
<dbReference type="PANTHER" id="PTHR48018">
    <property type="entry name" value="OLFACTORY RECEPTOR"/>
    <property type="match status" value="1"/>
</dbReference>
<dbReference type="Pfam" id="PF13853">
    <property type="entry name" value="7tm_4"/>
    <property type="match status" value="1"/>
</dbReference>
<dbReference type="PRINTS" id="PR00237">
    <property type="entry name" value="GPCRRHODOPSN"/>
</dbReference>
<dbReference type="PRINTS" id="PR00245">
    <property type="entry name" value="OLFACTORYR"/>
</dbReference>
<dbReference type="SUPFAM" id="SSF81321">
    <property type="entry name" value="Family A G protein-coupled receptor-like"/>
    <property type="match status" value="1"/>
</dbReference>
<dbReference type="PROSITE" id="PS00237">
    <property type="entry name" value="G_PROTEIN_RECEP_F1_1"/>
    <property type="match status" value="1"/>
</dbReference>
<dbReference type="PROSITE" id="PS50262">
    <property type="entry name" value="G_PROTEIN_RECEP_F1_2"/>
    <property type="match status" value="1"/>
</dbReference>
<feature type="chain" id="PRO_0000269655" description="Olfactory receptor 5K16">
    <location>
        <begin position="1"/>
        <end position="317"/>
    </location>
</feature>
<feature type="topological domain" description="Extracellular" evidence="1">
    <location>
        <begin position="1"/>
        <end position="28"/>
    </location>
</feature>
<feature type="transmembrane region" description="Helical; Name=1" evidence="1">
    <location>
        <begin position="29"/>
        <end position="49"/>
    </location>
</feature>
<feature type="topological domain" description="Cytoplasmic" evidence="1">
    <location>
        <begin position="50"/>
        <end position="56"/>
    </location>
</feature>
<feature type="transmembrane region" description="Helical; Name=2" evidence="1">
    <location>
        <begin position="57"/>
        <end position="77"/>
    </location>
</feature>
<feature type="topological domain" description="Extracellular" evidence="1">
    <location>
        <begin position="78"/>
        <end position="93"/>
    </location>
</feature>
<feature type="transmembrane region" description="Helical; Name=3" evidence="1">
    <location>
        <begin position="94"/>
        <end position="114"/>
    </location>
</feature>
<feature type="topological domain" description="Cytoplasmic" evidence="1">
    <location>
        <begin position="115"/>
        <end position="144"/>
    </location>
</feature>
<feature type="transmembrane region" description="Helical; Name=4" evidence="1">
    <location>
        <begin position="145"/>
        <end position="165"/>
    </location>
</feature>
<feature type="topological domain" description="Extracellular" evidence="1">
    <location>
        <begin position="166"/>
        <end position="198"/>
    </location>
</feature>
<feature type="transmembrane region" description="Helical; Name=5" evidence="1">
    <location>
        <begin position="199"/>
        <end position="219"/>
    </location>
</feature>
<feature type="topological domain" description="Cytoplasmic" evidence="1">
    <location>
        <begin position="220"/>
        <end position="239"/>
    </location>
</feature>
<feature type="transmembrane region" description="Helical; Name=6" evidence="1">
    <location>
        <begin position="240"/>
        <end position="259"/>
    </location>
</feature>
<feature type="topological domain" description="Extracellular" evidence="1">
    <location>
        <begin position="260"/>
        <end position="268"/>
    </location>
</feature>
<feature type="transmembrane region" description="Helical; Name=7" evidence="1">
    <location>
        <begin position="269"/>
        <end position="289"/>
    </location>
</feature>
<feature type="topological domain" description="Cytoplasmic" evidence="1">
    <location>
        <begin position="290"/>
        <end position="317"/>
    </location>
</feature>
<feature type="glycosylation site" description="N-linked (GlcNAc...) asparagine" evidence="1">
    <location>
        <position position="5"/>
    </location>
</feature>
<feature type="disulfide bond" evidence="2">
    <location>
        <begin position="97"/>
        <end position="189"/>
    </location>
</feature>
<reference key="1">
    <citation type="journal article" date="2002" name="Hum. Mol. Genet.">
        <title>Different evolutionary processes shaped the mouse and human olfactory receptor gene families.</title>
        <authorList>
            <person name="Young J.M."/>
            <person name="Friedman C."/>
            <person name="Williams E.M."/>
            <person name="Ross J.A."/>
            <person name="Tonnes-Priddy L."/>
            <person name="Trask B.J."/>
        </authorList>
    </citation>
    <scope>NUCLEOTIDE SEQUENCE [GENOMIC DNA]</scope>
</reference>
<reference key="2">
    <citation type="journal article" date="2002" name="Hum. Mol. Genet.">
        <authorList>
            <person name="Young J.M."/>
            <person name="Friedman C."/>
            <person name="Williams E.M."/>
            <person name="Ross J.A."/>
            <person name="Tonnes-Priddy L."/>
            <person name="Trask B.J."/>
        </authorList>
    </citation>
    <scope>ERRATUM OF PUBMED:11875048</scope>
</reference>
<gene>
    <name evidence="4" type="primary">Or5k16</name>
    <name evidence="4" type="synonym">Olfr180</name>
</gene>
<comment type="function">
    <text evidence="3">Potential odorant receptor.</text>
</comment>
<comment type="subcellular location">
    <subcellularLocation>
        <location evidence="3">Cell membrane</location>
        <topology evidence="1">Multi-pass membrane protein</topology>
    </subcellularLocation>
</comment>
<comment type="similarity">
    <text evidence="2">Belongs to the G-protein coupled receptor 1 family.</text>
</comment>
<organism>
    <name type="scientific">Mus musculus</name>
    <name type="common">Mouse</name>
    <dbReference type="NCBI Taxonomy" id="10090"/>
    <lineage>
        <taxon>Eukaryota</taxon>
        <taxon>Metazoa</taxon>
        <taxon>Chordata</taxon>
        <taxon>Craniata</taxon>
        <taxon>Vertebrata</taxon>
        <taxon>Euteleostomi</taxon>
        <taxon>Mammalia</taxon>
        <taxon>Eutheria</taxon>
        <taxon>Euarchontoglires</taxon>
        <taxon>Glires</taxon>
        <taxon>Rodentia</taxon>
        <taxon>Myomorpha</taxon>
        <taxon>Muroidea</taxon>
        <taxon>Muridae</taxon>
        <taxon>Murinae</taxon>
        <taxon>Mus</taxon>
        <taxon>Mus</taxon>
    </lineage>
</organism>